<evidence type="ECO:0000255" key="1">
    <source>
        <dbReference type="HAMAP-Rule" id="MF_00818"/>
    </source>
</evidence>
<proteinExistence type="inferred from homology"/>
<organism>
    <name type="scientific">Aquifex aeolicus (strain VF5)</name>
    <dbReference type="NCBI Taxonomy" id="224324"/>
    <lineage>
        <taxon>Bacteria</taxon>
        <taxon>Pseudomonadati</taxon>
        <taxon>Aquificota</taxon>
        <taxon>Aquificia</taxon>
        <taxon>Aquificales</taxon>
        <taxon>Aquificaceae</taxon>
        <taxon>Aquifex</taxon>
    </lineage>
</organism>
<keyword id="KW-0963">Cytoplasm</keyword>
<keyword id="KW-0521">NADP</keyword>
<keyword id="KW-0560">Oxidoreductase</keyword>
<keyword id="KW-0671">Queuosine biosynthesis</keyword>
<keyword id="KW-1185">Reference proteome</keyword>
<gene>
    <name evidence="1" type="primary">queF</name>
    <name type="ordered locus">aq_931</name>
</gene>
<dbReference type="EC" id="1.7.1.13" evidence="1"/>
<dbReference type="EMBL" id="AE000657">
    <property type="protein sequence ID" value="AAC07039.1"/>
    <property type="molecule type" value="Genomic_DNA"/>
</dbReference>
<dbReference type="PIR" id="F70380">
    <property type="entry name" value="F70380"/>
</dbReference>
<dbReference type="RefSeq" id="NP_213635.1">
    <property type="nucleotide sequence ID" value="NC_000918.1"/>
</dbReference>
<dbReference type="RefSeq" id="WP_010880573.1">
    <property type="nucleotide sequence ID" value="NC_000918.1"/>
</dbReference>
<dbReference type="SMR" id="O67073"/>
<dbReference type="STRING" id="224324.aq_931"/>
<dbReference type="EnsemblBacteria" id="AAC07039">
    <property type="protein sequence ID" value="AAC07039"/>
    <property type="gene ID" value="aq_931"/>
</dbReference>
<dbReference type="KEGG" id="aae:aq_931"/>
<dbReference type="PATRIC" id="fig|224324.8.peg.729"/>
<dbReference type="eggNOG" id="COG0780">
    <property type="taxonomic scope" value="Bacteria"/>
</dbReference>
<dbReference type="HOGENOM" id="CLU_102489_1_1_0"/>
<dbReference type="InParanoid" id="O67073"/>
<dbReference type="OrthoDB" id="9795077at2"/>
<dbReference type="UniPathway" id="UPA00392"/>
<dbReference type="Proteomes" id="UP000000798">
    <property type="component" value="Chromosome"/>
</dbReference>
<dbReference type="GO" id="GO:0005829">
    <property type="term" value="C:cytosol"/>
    <property type="evidence" value="ECO:0000318"/>
    <property type="project" value="GO_Central"/>
</dbReference>
<dbReference type="GO" id="GO:0033739">
    <property type="term" value="F:preQ1 synthase activity"/>
    <property type="evidence" value="ECO:0000318"/>
    <property type="project" value="GO_Central"/>
</dbReference>
<dbReference type="GO" id="GO:0008616">
    <property type="term" value="P:queuosine biosynthetic process"/>
    <property type="evidence" value="ECO:0000318"/>
    <property type="project" value="GO_Central"/>
</dbReference>
<dbReference type="GO" id="GO:0006400">
    <property type="term" value="P:tRNA modification"/>
    <property type="evidence" value="ECO:0007669"/>
    <property type="project" value="UniProtKB-UniRule"/>
</dbReference>
<dbReference type="Gene3D" id="3.30.1130.10">
    <property type="match status" value="1"/>
</dbReference>
<dbReference type="HAMAP" id="MF_00818">
    <property type="entry name" value="QueF_type1"/>
    <property type="match status" value="1"/>
</dbReference>
<dbReference type="InterPro" id="IPR043133">
    <property type="entry name" value="GTP-CH-I_C/QueF"/>
</dbReference>
<dbReference type="InterPro" id="IPR050084">
    <property type="entry name" value="NADPH_dep_7-cyano-7-deazaG_red"/>
</dbReference>
<dbReference type="InterPro" id="IPR029500">
    <property type="entry name" value="QueF"/>
</dbReference>
<dbReference type="InterPro" id="IPR016856">
    <property type="entry name" value="QueF_type1"/>
</dbReference>
<dbReference type="NCBIfam" id="TIGR03139">
    <property type="entry name" value="QueF-II"/>
    <property type="match status" value="1"/>
</dbReference>
<dbReference type="PANTHER" id="PTHR34354">
    <property type="entry name" value="NADPH-DEPENDENT 7-CYANO-7-DEAZAGUANINE REDUCTASE"/>
    <property type="match status" value="1"/>
</dbReference>
<dbReference type="PANTHER" id="PTHR34354:SF1">
    <property type="entry name" value="NADPH-DEPENDENT 7-CYANO-7-DEAZAGUANINE REDUCTASE"/>
    <property type="match status" value="1"/>
</dbReference>
<dbReference type="Pfam" id="PF14489">
    <property type="entry name" value="QueF"/>
    <property type="match status" value="1"/>
</dbReference>
<dbReference type="PIRSF" id="PIRSF027377">
    <property type="entry name" value="Nitrile_oxidored_QueF"/>
    <property type="match status" value="1"/>
</dbReference>
<dbReference type="SUPFAM" id="SSF55620">
    <property type="entry name" value="Tetrahydrobiopterin biosynthesis enzymes-like"/>
    <property type="match status" value="1"/>
</dbReference>
<reference key="1">
    <citation type="journal article" date="1998" name="Nature">
        <title>The complete genome of the hyperthermophilic bacterium Aquifex aeolicus.</title>
        <authorList>
            <person name="Deckert G."/>
            <person name="Warren P.V."/>
            <person name="Gaasterland T."/>
            <person name="Young W.G."/>
            <person name="Lenox A.L."/>
            <person name="Graham D.E."/>
            <person name="Overbeek R."/>
            <person name="Snead M.A."/>
            <person name="Keller M."/>
            <person name="Aujay M."/>
            <person name="Huber R."/>
            <person name="Feldman R.A."/>
            <person name="Short J.M."/>
            <person name="Olsen G.J."/>
            <person name="Swanson R.V."/>
        </authorList>
    </citation>
    <scope>NUCLEOTIDE SEQUENCE [LARGE SCALE GENOMIC DNA]</scope>
    <source>
        <strain>VF5</strain>
    </source>
</reference>
<protein>
    <recommendedName>
        <fullName evidence="1">NADPH-dependent 7-cyano-7-deazaguanine reductase</fullName>
        <ecNumber evidence="1">1.7.1.13</ecNumber>
    </recommendedName>
    <alternativeName>
        <fullName evidence="1">7-cyano-7-carbaguanine reductase</fullName>
    </alternativeName>
    <alternativeName>
        <fullName evidence="1">NADPH-dependent nitrile oxidoreductase</fullName>
    </alternativeName>
    <alternativeName>
        <fullName evidence="1">PreQ(0) reductase</fullName>
    </alternativeName>
</protein>
<sequence length="129" mass="15331">MEAKEKKYGEIEIEKAQLEAWPNPNPERDYMIEITFPEFTCLCPRSGYPDFATIKIRYIPDKYIVELKSLKLWLNKFRNRYISHEAATNEIYQALYDLLKPRFLEVVGDFHPRGNVHTVVRVRSDENYG</sequence>
<feature type="chain" id="PRO_0000162949" description="NADPH-dependent 7-cyano-7-deazaguanine reductase">
    <location>
        <begin position="1"/>
        <end position="129"/>
    </location>
</feature>
<feature type="active site" description="Thioimide intermediate" evidence="1">
    <location>
        <position position="43"/>
    </location>
</feature>
<feature type="active site" description="Proton donor" evidence="1">
    <location>
        <position position="50"/>
    </location>
</feature>
<feature type="binding site" evidence="1">
    <location>
        <begin position="65"/>
        <end position="67"/>
    </location>
    <ligand>
        <name>substrate</name>
    </ligand>
</feature>
<feature type="binding site" evidence="1">
    <location>
        <begin position="84"/>
        <end position="85"/>
    </location>
    <ligand>
        <name>substrate</name>
    </ligand>
</feature>
<accession>O67073</accession>
<comment type="function">
    <text evidence="1">Catalyzes the NADPH-dependent reduction of 7-cyano-7-deazaguanine (preQ0) to 7-aminomethyl-7-deazaguanine (preQ1).</text>
</comment>
<comment type="catalytic activity">
    <reaction evidence="1">
        <text>7-aminomethyl-7-carbaguanine + 2 NADP(+) = 7-cyano-7-deazaguanine + 2 NADPH + 3 H(+)</text>
        <dbReference type="Rhea" id="RHEA:13409"/>
        <dbReference type="ChEBI" id="CHEBI:15378"/>
        <dbReference type="ChEBI" id="CHEBI:45075"/>
        <dbReference type="ChEBI" id="CHEBI:57783"/>
        <dbReference type="ChEBI" id="CHEBI:58349"/>
        <dbReference type="ChEBI" id="CHEBI:58703"/>
        <dbReference type="EC" id="1.7.1.13"/>
    </reaction>
</comment>
<comment type="pathway">
    <text evidence="1">tRNA modification; tRNA-queuosine biosynthesis.</text>
</comment>
<comment type="subcellular location">
    <subcellularLocation>
        <location evidence="1">Cytoplasm</location>
    </subcellularLocation>
</comment>
<comment type="similarity">
    <text evidence="1">Belongs to the GTP cyclohydrolase I family. QueF type 1 subfamily.</text>
</comment>
<name>QUEF_AQUAE</name>